<evidence type="ECO:0000255" key="1"/>
<evidence type="ECO:0000255" key="2">
    <source>
        <dbReference type="PROSITE-ProRule" id="PRU01055"/>
    </source>
</evidence>
<evidence type="ECO:0000256" key="3">
    <source>
        <dbReference type="SAM" id="MobiDB-lite"/>
    </source>
</evidence>
<evidence type="ECO:0000269" key="4">
    <source>
    </source>
</evidence>
<evidence type="ECO:0000305" key="5"/>
<protein>
    <recommendedName>
        <fullName>Dynamin-like protein B</fullName>
        <ecNumber>3.6.5.5</ecNumber>
    </recommendedName>
</protein>
<comment type="function">
    <text evidence="4">Involved in cytokinesis. May hydrolyze GTP.</text>
</comment>
<comment type="catalytic activity">
    <reaction>
        <text>GTP + H2O = GDP + phosphate + H(+)</text>
        <dbReference type="Rhea" id="RHEA:19669"/>
        <dbReference type="ChEBI" id="CHEBI:15377"/>
        <dbReference type="ChEBI" id="CHEBI:15378"/>
        <dbReference type="ChEBI" id="CHEBI:37565"/>
        <dbReference type="ChEBI" id="CHEBI:43474"/>
        <dbReference type="ChEBI" id="CHEBI:58189"/>
        <dbReference type="EC" id="3.6.5.5"/>
    </reaction>
</comment>
<comment type="subcellular location">
    <subcellularLocation>
        <location evidence="5">Cytoplasm</location>
    </subcellularLocation>
</comment>
<comment type="developmental stage">
    <text evidence="4">Expression begins during cell cycle progression, between 12 and 24 hours after germination. Reach a maximum around mid-log phase and disappear during the stationary phase.</text>
</comment>
<comment type="disruption phenotype">
    <text evidence="4">Produced cells are larger and a large amount of them contains more than 2 nuclei.</text>
</comment>
<comment type="similarity">
    <text evidence="2">Belongs to the TRAFAC class dynamin-like GTPase superfamily. Dynamin/Fzo/YdjA family.</text>
</comment>
<feature type="chain" id="PRO_0000371338" description="Dynamin-like protein B">
    <location>
        <begin position="1"/>
        <end position="808"/>
    </location>
</feature>
<feature type="domain" description="Dynamin-type G" evidence="2">
    <location>
        <begin position="43"/>
        <end position="340"/>
    </location>
</feature>
<feature type="region of interest" description="G1 motif" evidence="2">
    <location>
        <begin position="53"/>
        <end position="60"/>
    </location>
</feature>
<feature type="region of interest" description="G2 motif" evidence="2">
    <location>
        <begin position="79"/>
        <end position="80"/>
    </location>
</feature>
<feature type="region of interest" description="G3 motif" evidence="2">
    <location>
        <begin position="150"/>
        <end position="153"/>
    </location>
</feature>
<feature type="region of interest" description="G4 motif" evidence="2">
    <location>
        <begin position="239"/>
        <end position="242"/>
    </location>
</feature>
<feature type="region of interest" description="G5 motif" evidence="2">
    <location>
        <begin position="276"/>
        <end position="279"/>
    </location>
</feature>
<feature type="region of interest" description="Disordered" evidence="3">
    <location>
        <begin position="536"/>
        <end position="565"/>
    </location>
</feature>
<feature type="region of interest" description="Disordered" evidence="3">
    <location>
        <begin position="665"/>
        <end position="695"/>
    </location>
</feature>
<feature type="compositionally biased region" description="Low complexity" evidence="3">
    <location>
        <begin position="552"/>
        <end position="565"/>
    </location>
</feature>
<feature type="compositionally biased region" description="Low complexity" evidence="3">
    <location>
        <begin position="665"/>
        <end position="694"/>
    </location>
</feature>
<feature type="binding site" evidence="1">
    <location>
        <begin position="53"/>
        <end position="60"/>
    </location>
    <ligand>
        <name>GTP</name>
        <dbReference type="ChEBI" id="CHEBI:37565"/>
    </ligand>
</feature>
<feature type="binding site" evidence="1">
    <location>
        <begin position="150"/>
        <end position="154"/>
    </location>
    <ligand>
        <name>GTP</name>
        <dbReference type="ChEBI" id="CHEBI:37565"/>
    </ligand>
</feature>
<feature type="binding site" evidence="1">
    <location>
        <begin position="239"/>
        <end position="242"/>
    </location>
    <ligand>
        <name>GTP</name>
        <dbReference type="ChEBI" id="CHEBI:37565"/>
    </ligand>
</feature>
<dbReference type="EC" id="3.6.5.5"/>
<dbReference type="EMBL" id="AAFI02000082">
    <property type="protein sequence ID" value="EAL64500.1"/>
    <property type="molecule type" value="Genomic_DNA"/>
</dbReference>
<dbReference type="RefSeq" id="XP_638012.1">
    <property type="nucleotide sequence ID" value="XM_632920.1"/>
</dbReference>
<dbReference type="SMR" id="Q54MH8"/>
<dbReference type="FunCoup" id="Q54MH8">
    <property type="interactions" value="1"/>
</dbReference>
<dbReference type="STRING" id="44689.Q54MH8"/>
<dbReference type="PaxDb" id="44689-DDB0302371"/>
<dbReference type="EnsemblProtists" id="EAL64500">
    <property type="protein sequence ID" value="EAL64500"/>
    <property type="gene ID" value="DDB_G0285931"/>
</dbReference>
<dbReference type="GeneID" id="8625363"/>
<dbReference type="KEGG" id="ddi:DDB_G0285931"/>
<dbReference type="dictyBase" id="DDB_G0285931">
    <property type="gene designation" value="dlpB"/>
</dbReference>
<dbReference type="VEuPathDB" id="AmoebaDB:DDB_G0285931"/>
<dbReference type="eggNOG" id="KOG0446">
    <property type="taxonomic scope" value="Eukaryota"/>
</dbReference>
<dbReference type="HOGENOM" id="CLU_348987_0_0_1"/>
<dbReference type="InParanoid" id="Q54MH8"/>
<dbReference type="OMA" id="KAYNKIM"/>
<dbReference type="PhylomeDB" id="Q54MH8"/>
<dbReference type="BRENDA" id="3.6.5.5">
    <property type="organism ID" value="1939"/>
</dbReference>
<dbReference type="PRO" id="PR:Q54MH8"/>
<dbReference type="Proteomes" id="UP000002195">
    <property type="component" value="Chromosome 4"/>
</dbReference>
<dbReference type="GO" id="GO:0032154">
    <property type="term" value="C:cleavage furrow"/>
    <property type="evidence" value="ECO:0000314"/>
    <property type="project" value="dictyBase"/>
</dbReference>
<dbReference type="GO" id="GO:0005737">
    <property type="term" value="C:cytoplasm"/>
    <property type="evidence" value="ECO:0000318"/>
    <property type="project" value="GO_Central"/>
</dbReference>
<dbReference type="GO" id="GO:0016020">
    <property type="term" value="C:membrane"/>
    <property type="evidence" value="ECO:0000318"/>
    <property type="project" value="GO_Central"/>
</dbReference>
<dbReference type="GO" id="GO:0005874">
    <property type="term" value="C:microtubule"/>
    <property type="evidence" value="ECO:0000318"/>
    <property type="project" value="GO_Central"/>
</dbReference>
<dbReference type="GO" id="GO:0005525">
    <property type="term" value="F:GTP binding"/>
    <property type="evidence" value="ECO:0007669"/>
    <property type="project" value="UniProtKB-KW"/>
</dbReference>
<dbReference type="GO" id="GO:0003924">
    <property type="term" value="F:GTPase activity"/>
    <property type="evidence" value="ECO:0000318"/>
    <property type="project" value="GO_Central"/>
</dbReference>
<dbReference type="GO" id="GO:0008017">
    <property type="term" value="F:microtubule binding"/>
    <property type="evidence" value="ECO:0000318"/>
    <property type="project" value="GO_Central"/>
</dbReference>
<dbReference type="GO" id="GO:0007015">
    <property type="term" value="P:actin filament organization"/>
    <property type="evidence" value="ECO:0000316"/>
    <property type="project" value="dictyBase"/>
</dbReference>
<dbReference type="GO" id="GO:0061952">
    <property type="term" value="P:midbody abscission"/>
    <property type="evidence" value="ECO:0000315"/>
    <property type="project" value="dictyBase"/>
</dbReference>
<dbReference type="GO" id="GO:0000281">
    <property type="term" value="P:mitotic cytokinesis"/>
    <property type="evidence" value="ECO:0000315"/>
    <property type="project" value="dictyBase"/>
</dbReference>
<dbReference type="GO" id="GO:1905345">
    <property type="term" value="P:protein localization to cleavage furrow"/>
    <property type="evidence" value="ECO:0000315"/>
    <property type="project" value="dictyBase"/>
</dbReference>
<dbReference type="FunFam" id="3.40.50.300:FF:003865">
    <property type="entry name" value="Dynamin-like protein B"/>
    <property type="match status" value="1"/>
</dbReference>
<dbReference type="Gene3D" id="3.40.50.300">
    <property type="entry name" value="P-loop containing nucleotide triphosphate hydrolases"/>
    <property type="match status" value="1"/>
</dbReference>
<dbReference type="InterPro" id="IPR045063">
    <property type="entry name" value="Dynamin_N"/>
</dbReference>
<dbReference type="InterPro" id="IPR030381">
    <property type="entry name" value="G_DYNAMIN_dom"/>
</dbReference>
<dbReference type="InterPro" id="IPR027417">
    <property type="entry name" value="P-loop_NTPase"/>
</dbReference>
<dbReference type="Pfam" id="PF00350">
    <property type="entry name" value="Dynamin_N"/>
    <property type="match status" value="1"/>
</dbReference>
<dbReference type="SUPFAM" id="SSF52540">
    <property type="entry name" value="P-loop containing nucleoside triphosphate hydrolases"/>
    <property type="match status" value="1"/>
</dbReference>
<dbReference type="PROSITE" id="PS51718">
    <property type="entry name" value="G_DYNAMIN_2"/>
    <property type="match status" value="1"/>
</dbReference>
<accession>Q54MH8</accession>
<proteinExistence type="evidence at transcript level"/>
<name>DLPB_DICDI</name>
<gene>
    <name type="primary">dlpB</name>
    <name type="ORF">DDB_G0285931</name>
</gene>
<reference key="1">
    <citation type="journal article" date="2005" name="Nature">
        <title>The genome of the social amoeba Dictyostelium discoideum.</title>
        <authorList>
            <person name="Eichinger L."/>
            <person name="Pachebat J.A."/>
            <person name="Gloeckner G."/>
            <person name="Rajandream M.A."/>
            <person name="Sucgang R."/>
            <person name="Berriman M."/>
            <person name="Song J."/>
            <person name="Olsen R."/>
            <person name="Szafranski K."/>
            <person name="Xu Q."/>
            <person name="Tunggal B."/>
            <person name="Kummerfeld S."/>
            <person name="Madera M."/>
            <person name="Konfortov B.A."/>
            <person name="Rivero F."/>
            <person name="Bankier A.T."/>
            <person name="Lehmann R."/>
            <person name="Hamlin N."/>
            <person name="Davies R."/>
            <person name="Gaudet P."/>
            <person name="Fey P."/>
            <person name="Pilcher K."/>
            <person name="Chen G."/>
            <person name="Saunders D."/>
            <person name="Sodergren E.J."/>
            <person name="Davis P."/>
            <person name="Kerhornou A."/>
            <person name="Nie X."/>
            <person name="Hall N."/>
            <person name="Anjard C."/>
            <person name="Hemphill L."/>
            <person name="Bason N."/>
            <person name="Farbrother P."/>
            <person name="Desany B."/>
            <person name="Just E."/>
            <person name="Morio T."/>
            <person name="Rost R."/>
            <person name="Churcher C.M."/>
            <person name="Cooper J."/>
            <person name="Haydock S."/>
            <person name="van Driessche N."/>
            <person name="Cronin A."/>
            <person name="Goodhead I."/>
            <person name="Muzny D.M."/>
            <person name="Mourier T."/>
            <person name="Pain A."/>
            <person name="Lu M."/>
            <person name="Harper D."/>
            <person name="Lindsay R."/>
            <person name="Hauser H."/>
            <person name="James K.D."/>
            <person name="Quiles M."/>
            <person name="Madan Babu M."/>
            <person name="Saito T."/>
            <person name="Buchrieser C."/>
            <person name="Wardroper A."/>
            <person name="Felder M."/>
            <person name="Thangavelu M."/>
            <person name="Johnson D."/>
            <person name="Knights A."/>
            <person name="Loulseged H."/>
            <person name="Mungall K.L."/>
            <person name="Oliver K."/>
            <person name="Price C."/>
            <person name="Quail M.A."/>
            <person name="Urushihara H."/>
            <person name="Hernandez J."/>
            <person name="Rabbinowitsch E."/>
            <person name="Steffen D."/>
            <person name="Sanders M."/>
            <person name="Ma J."/>
            <person name="Kohara Y."/>
            <person name="Sharp S."/>
            <person name="Simmonds M.N."/>
            <person name="Spiegler S."/>
            <person name="Tivey A."/>
            <person name="Sugano S."/>
            <person name="White B."/>
            <person name="Walker D."/>
            <person name="Woodward J.R."/>
            <person name="Winckler T."/>
            <person name="Tanaka Y."/>
            <person name="Shaulsky G."/>
            <person name="Schleicher M."/>
            <person name="Weinstock G.M."/>
            <person name="Rosenthal A."/>
            <person name="Cox E.C."/>
            <person name="Chisholm R.L."/>
            <person name="Gibbs R.A."/>
            <person name="Loomis W.F."/>
            <person name="Platzer M."/>
            <person name="Kay R.R."/>
            <person name="Williams J.G."/>
            <person name="Dear P.H."/>
            <person name="Noegel A.A."/>
            <person name="Barrell B.G."/>
            <person name="Kuspa A."/>
        </authorList>
    </citation>
    <scope>NUCLEOTIDE SEQUENCE [LARGE SCALE GENOMIC DNA]</scope>
    <source>
        <strain>AX4</strain>
    </source>
</reference>
<reference key="2">
    <citation type="journal article" date="2008" name="Proc. Natl. Acad. Sci. U.S.A.">
        <title>Evolutionary linkage between eukaryotic cytokinesis and chloroplast division by dynamin proteins.</title>
        <authorList>
            <person name="Miyagishima S.Y."/>
            <person name="Kuwayama H."/>
            <person name="Urushihara H."/>
            <person name="Nakanishi H."/>
        </authorList>
    </citation>
    <scope>FUNCTION</scope>
    <scope>DISRUPTION PHENOTYPE</scope>
    <scope>DEVELOPMENTAL STAGE</scope>
</reference>
<sequence>MDRQSVVKSTAIPFPLNFDNEKYDDMYKAYNKIMVLARDLNAFIETPEFVFIGKDGNGKSALIESFIGFPMMIGEGSSLRPLHITLMNNARCEEPIVTFKRDRSLDSYEFDRQIELSMVSSEISKRNQKTSIPIEITIEYRYYLNMLLIEPPSVSIQPTNAITIQGQSMTSPANQLANKIAKLSIGNEMGEMITQYTKSNNRTLVFVETSTNGGTNSSEMLELAKKLDYKLDRSIFVFNKFHSLLTGDQPFTNGRDANRFLGSPSIGAPTFFTTLPSTAQRSQCNSKDQLSQLCDQLQQTDLNILEQLQFDKKYERNVGLSAFRHWISEFTWRKYLDSVPEVLKRLNSFRTTSEDQLYQIRQQLERTNAVTLRQIANSYVSIEFIQCIEKLVTRTLEGNPSLNGQTLEEEKSQDETGDWYDHNGKPILLLNDEKLVTFYDNKLYGGQQFERLLTEFKCITEVIQLEELSISEVACAIGSNRPSNASVIAWAASDLAQKKIKEALLPLVDQLFKRATYILRRLVDIVDRMIENKKKSSFRRHGNSTSLFQDNSSPSSQSQSQSSSISQSASLSSENMIYGIQSINGSDSVSRPSHENTIVNVEDHPYFIYSVKEMYFKYVDQIAADCKNKCMDEFYTTRLIYWDLQSNKDLKKFCTDSPCVSLNNSLNNNNKSTTPGNNNNNNNNNSNNNYNNSNHILNPKETHTMVTELASKLFQDIRNRMSKNIMLKCYNYFLIPMQMDLKLNIQDNITKLSDAMLEEIFEIQTTKERLREDEQHLAQICNQFIQQEENYKKYSQSFSHPFPSAVRN</sequence>
<organism>
    <name type="scientific">Dictyostelium discoideum</name>
    <name type="common">Social amoeba</name>
    <dbReference type="NCBI Taxonomy" id="44689"/>
    <lineage>
        <taxon>Eukaryota</taxon>
        <taxon>Amoebozoa</taxon>
        <taxon>Evosea</taxon>
        <taxon>Eumycetozoa</taxon>
        <taxon>Dictyostelia</taxon>
        <taxon>Dictyosteliales</taxon>
        <taxon>Dictyosteliaceae</taxon>
        <taxon>Dictyostelium</taxon>
    </lineage>
</organism>
<keyword id="KW-0131">Cell cycle</keyword>
<keyword id="KW-0132">Cell division</keyword>
<keyword id="KW-0963">Cytoplasm</keyword>
<keyword id="KW-0342">GTP-binding</keyword>
<keyword id="KW-0378">Hydrolase</keyword>
<keyword id="KW-0505">Motor protein</keyword>
<keyword id="KW-0547">Nucleotide-binding</keyword>
<keyword id="KW-1185">Reference proteome</keyword>